<accession>Q3ANQ3</accession>
<sequence length="473" mass="52091">MRNSLSFQDEPIVALATPLGVGALAVVRMSGQGVFDIARKVFHKQGAPDFHLASSKGFQAHFGTIHDAQGVVDEVIALVFRSPRSFTMEDMVEFSCHGGPVVVQHLLKALIDAGCRLAEPGEFTRRAFLNGRIDLLQAEAIGEMIHARSESAFRTAVTQMQGRLSRQLEEMREKLLHSCALLELELDFSEEDVEFQNREELREDVQRLQGEINRLLDSYQHGRLLKEGVATVLVGSPNAGKSTLLNALLGEERSIVSHQPGTTRDYIEEPLLLGSTLFRLIDTAGLREGEEEVEHEGIRRSYRKIAEADVVLYLLDVSHPDYCNELSDITSLLEQASPNVQLLLVANKCDAITNPTERLAQLQAAMPQATVCGIAAKEGDGLEALKQQMSNMVAGLDKLHEASVLITSMRHYEALRRASDALENGACLVAEHAETELVAFELRSALEAVGEITGKVVNDEILSLIFERFCIGK</sequence>
<name>MNME_CHLCH</name>
<feature type="chain" id="PRO_1000048814" description="tRNA modification GTPase MnmE">
    <location>
        <begin position="1"/>
        <end position="473"/>
    </location>
</feature>
<feature type="domain" description="TrmE-type G">
    <location>
        <begin position="228"/>
        <end position="394"/>
    </location>
</feature>
<feature type="binding site" evidence="1">
    <location>
        <position position="28"/>
    </location>
    <ligand>
        <name>(6S)-5-formyl-5,6,7,8-tetrahydrofolate</name>
        <dbReference type="ChEBI" id="CHEBI:57457"/>
    </ligand>
</feature>
<feature type="binding site" evidence="1">
    <location>
        <position position="93"/>
    </location>
    <ligand>
        <name>(6S)-5-formyl-5,6,7,8-tetrahydrofolate</name>
        <dbReference type="ChEBI" id="CHEBI:57457"/>
    </ligand>
</feature>
<feature type="binding site" evidence="1">
    <location>
        <position position="132"/>
    </location>
    <ligand>
        <name>(6S)-5-formyl-5,6,7,8-tetrahydrofolate</name>
        <dbReference type="ChEBI" id="CHEBI:57457"/>
    </ligand>
</feature>
<feature type="binding site" evidence="1">
    <location>
        <begin position="238"/>
        <end position="243"/>
    </location>
    <ligand>
        <name>GTP</name>
        <dbReference type="ChEBI" id="CHEBI:37565"/>
    </ligand>
</feature>
<feature type="binding site" evidence="1">
    <location>
        <position position="242"/>
    </location>
    <ligand>
        <name>Mg(2+)</name>
        <dbReference type="ChEBI" id="CHEBI:18420"/>
    </ligand>
</feature>
<feature type="binding site" evidence="1">
    <location>
        <begin position="257"/>
        <end position="263"/>
    </location>
    <ligand>
        <name>GTP</name>
        <dbReference type="ChEBI" id="CHEBI:37565"/>
    </ligand>
</feature>
<feature type="binding site" evidence="1">
    <location>
        <position position="263"/>
    </location>
    <ligand>
        <name>Mg(2+)</name>
        <dbReference type="ChEBI" id="CHEBI:18420"/>
    </ligand>
</feature>
<feature type="binding site" evidence="1">
    <location>
        <begin position="282"/>
        <end position="285"/>
    </location>
    <ligand>
        <name>GTP</name>
        <dbReference type="ChEBI" id="CHEBI:37565"/>
    </ligand>
</feature>
<feature type="binding site" evidence="1">
    <location>
        <position position="473"/>
    </location>
    <ligand>
        <name>(6S)-5-formyl-5,6,7,8-tetrahydrofolate</name>
        <dbReference type="ChEBI" id="CHEBI:57457"/>
    </ligand>
</feature>
<reference key="1">
    <citation type="submission" date="2005-08" db="EMBL/GenBank/DDBJ databases">
        <title>Complete sequence of Chlorobium chlorochromatii CaD3.</title>
        <authorList>
            <consortium name="US DOE Joint Genome Institute"/>
            <person name="Copeland A."/>
            <person name="Lucas S."/>
            <person name="Lapidus A."/>
            <person name="Barry K."/>
            <person name="Detter J.C."/>
            <person name="Glavina T."/>
            <person name="Hammon N."/>
            <person name="Israni S."/>
            <person name="Pitluck S."/>
            <person name="Bryant D."/>
            <person name="Schmutz J."/>
            <person name="Larimer F."/>
            <person name="Land M."/>
            <person name="Kyrpides N."/>
            <person name="Ivanova N."/>
            <person name="Richardson P."/>
        </authorList>
    </citation>
    <scope>NUCLEOTIDE SEQUENCE [LARGE SCALE GENOMIC DNA]</scope>
    <source>
        <strain>CaD3</strain>
    </source>
</reference>
<dbReference type="EC" id="3.6.-.-" evidence="1"/>
<dbReference type="EMBL" id="CP000108">
    <property type="protein sequence ID" value="ABB27378.1"/>
    <property type="molecule type" value="Genomic_DNA"/>
</dbReference>
<dbReference type="SMR" id="Q3ANQ3"/>
<dbReference type="STRING" id="340177.Cag_0100"/>
<dbReference type="KEGG" id="cch:Cag_0100"/>
<dbReference type="eggNOG" id="COG0486">
    <property type="taxonomic scope" value="Bacteria"/>
</dbReference>
<dbReference type="HOGENOM" id="CLU_019624_4_1_10"/>
<dbReference type="OrthoDB" id="9805918at2"/>
<dbReference type="GO" id="GO:0005829">
    <property type="term" value="C:cytosol"/>
    <property type="evidence" value="ECO:0007669"/>
    <property type="project" value="TreeGrafter"/>
</dbReference>
<dbReference type="GO" id="GO:0005525">
    <property type="term" value="F:GTP binding"/>
    <property type="evidence" value="ECO:0007669"/>
    <property type="project" value="UniProtKB-UniRule"/>
</dbReference>
<dbReference type="GO" id="GO:0003924">
    <property type="term" value="F:GTPase activity"/>
    <property type="evidence" value="ECO:0007669"/>
    <property type="project" value="UniProtKB-UniRule"/>
</dbReference>
<dbReference type="GO" id="GO:0046872">
    <property type="term" value="F:metal ion binding"/>
    <property type="evidence" value="ECO:0007669"/>
    <property type="project" value="UniProtKB-KW"/>
</dbReference>
<dbReference type="GO" id="GO:0030488">
    <property type="term" value="P:tRNA methylation"/>
    <property type="evidence" value="ECO:0007669"/>
    <property type="project" value="TreeGrafter"/>
</dbReference>
<dbReference type="GO" id="GO:0002098">
    <property type="term" value="P:tRNA wobble uridine modification"/>
    <property type="evidence" value="ECO:0007669"/>
    <property type="project" value="TreeGrafter"/>
</dbReference>
<dbReference type="CDD" id="cd04164">
    <property type="entry name" value="trmE"/>
    <property type="match status" value="1"/>
</dbReference>
<dbReference type="CDD" id="cd14858">
    <property type="entry name" value="TrmE_N"/>
    <property type="match status" value="1"/>
</dbReference>
<dbReference type="FunFam" id="3.30.1360.120:FF:000003">
    <property type="entry name" value="tRNA modification GTPase MnmE"/>
    <property type="match status" value="1"/>
</dbReference>
<dbReference type="Gene3D" id="3.40.50.300">
    <property type="entry name" value="P-loop containing nucleotide triphosphate hydrolases"/>
    <property type="match status" value="1"/>
</dbReference>
<dbReference type="Gene3D" id="3.30.1360.120">
    <property type="entry name" value="Probable tRNA modification gtpase trme, domain 1"/>
    <property type="match status" value="1"/>
</dbReference>
<dbReference type="Gene3D" id="1.20.120.430">
    <property type="entry name" value="tRNA modification GTPase MnmE domain 2"/>
    <property type="match status" value="1"/>
</dbReference>
<dbReference type="HAMAP" id="MF_00379">
    <property type="entry name" value="GTPase_MnmE"/>
    <property type="match status" value="1"/>
</dbReference>
<dbReference type="InterPro" id="IPR031168">
    <property type="entry name" value="G_TrmE"/>
</dbReference>
<dbReference type="InterPro" id="IPR006073">
    <property type="entry name" value="GTP-bd"/>
</dbReference>
<dbReference type="InterPro" id="IPR018948">
    <property type="entry name" value="GTP-bd_TrmE_N"/>
</dbReference>
<dbReference type="InterPro" id="IPR004520">
    <property type="entry name" value="GTPase_MnmE"/>
</dbReference>
<dbReference type="InterPro" id="IPR027368">
    <property type="entry name" value="MnmE_dom2"/>
</dbReference>
<dbReference type="InterPro" id="IPR025867">
    <property type="entry name" value="MnmE_helical"/>
</dbReference>
<dbReference type="InterPro" id="IPR027417">
    <property type="entry name" value="P-loop_NTPase"/>
</dbReference>
<dbReference type="InterPro" id="IPR005225">
    <property type="entry name" value="Small_GTP-bd"/>
</dbReference>
<dbReference type="InterPro" id="IPR027266">
    <property type="entry name" value="TrmE/GcvT_dom1"/>
</dbReference>
<dbReference type="NCBIfam" id="TIGR00450">
    <property type="entry name" value="mnmE_trmE_thdF"/>
    <property type="match status" value="1"/>
</dbReference>
<dbReference type="NCBIfam" id="NF003661">
    <property type="entry name" value="PRK05291.1-3"/>
    <property type="match status" value="1"/>
</dbReference>
<dbReference type="NCBIfam" id="TIGR00231">
    <property type="entry name" value="small_GTP"/>
    <property type="match status" value="1"/>
</dbReference>
<dbReference type="PANTHER" id="PTHR42714">
    <property type="entry name" value="TRNA MODIFICATION GTPASE GTPBP3"/>
    <property type="match status" value="1"/>
</dbReference>
<dbReference type="PANTHER" id="PTHR42714:SF2">
    <property type="entry name" value="TRNA MODIFICATION GTPASE GTPBP3, MITOCHONDRIAL"/>
    <property type="match status" value="1"/>
</dbReference>
<dbReference type="Pfam" id="PF01926">
    <property type="entry name" value="MMR_HSR1"/>
    <property type="match status" value="1"/>
</dbReference>
<dbReference type="Pfam" id="PF12631">
    <property type="entry name" value="MnmE_helical"/>
    <property type="match status" value="1"/>
</dbReference>
<dbReference type="Pfam" id="PF10396">
    <property type="entry name" value="TrmE_N"/>
    <property type="match status" value="1"/>
</dbReference>
<dbReference type="PRINTS" id="PR00326">
    <property type="entry name" value="GTP1OBG"/>
</dbReference>
<dbReference type="SUPFAM" id="SSF52540">
    <property type="entry name" value="P-loop containing nucleoside triphosphate hydrolases"/>
    <property type="match status" value="1"/>
</dbReference>
<dbReference type="SUPFAM" id="SSF116878">
    <property type="entry name" value="TrmE connector domain"/>
    <property type="match status" value="1"/>
</dbReference>
<dbReference type="PROSITE" id="PS51709">
    <property type="entry name" value="G_TRME"/>
    <property type="match status" value="1"/>
</dbReference>
<comment type="function">
    <text evidence="1">Exhibits a very high intrinsic GTPase hydrolysis rate. Involved in the addition of a carboxymethylaminomethyl (cmnm) group at the wobble position (U34) of certain tRNAs, forming tRNA-cmnm(5)s(2)U34.</text>
</comment>
<comment type="cofactor">
    <cofactor evidence="1">
        <name>K(+)</name>
        <dbReference type="ChEBI" id="CHEBI:29103"/>
    </cofactor>
    <text evidence="1">Binds 1 potassium ion per subunit.</text>
</comment>
<comment type="subunit">
    <text evidence="1">Homodimer. Heterotetramer of two MnmE and two MnmG subunits.</text>
</comment>
<comment type="subcellular location">
    <subcellularLocation>
        <location evidence="1">Cytoplasm</location>
    </subcellularLocation>
</comment>
<comment type="similarity">
    <text evidence="1">Belongs to the TRAFAC class TrmE-Era-EngA-EngB-Septin-like GTPase superfamily. TrmE GTPase family.</text>
</comment>
<keyword id="KW-0963">Cytoplasm</keyword>
<keyword id="KW-0342">GTP-binding</keyword>
<keyword id="KW-0378">Hydrolase</keyword>
<keyword id="KW-0460">Magnesium</keyword>
<keyword id="KW-0479">Metal-binding</keyword>
<keyword id="KW-0547">Nucleotide-binding</keyword>
<keyword id="KW-0630">Potassium</keyword>
<keyword id="KW-0819">tRNA processing</keyword>
<organism>
    <name type="scientific">Chlorobium chlorochromatii (strain CaD3)</name>
    <dbReference type="NCBI Taxonomy" id="340177"/>
    <lineage>
        <taxon>Bacteria</taxon>
        <taxon>Pseudomonadati</taxon>
        <taxon>Chlorobiota</taxon>
        <taxon>Chlorobiia</taxon>
        <taxon>Chlorobiales</taxon>
        <taxon>Chlorobiaceae</taxon>
        <taxon>Chlorobium/Pelodictyon group</taxon>
        <taxon>Chlorobium</taxon>
    </lineage>
</organism>
<protein>
    <recommendedName>
        <fullName evidence="1">tRNA modification GTPase MnmE</fullName>
        <ecNumber evidence="1">3.6.-.-</ecNumber>
    </recommendedName>
</protein>
<proteinExistence type="inferred from homology"/>
<evidence type="ECO:0000255" key="1">
    <source>
        <dbReference type="HAMAP-Rule" id="MF_00379"/>
    </source>
</evidence>
<gene>
    <name evidence="1" type="primary">mnmE</name>
    <name evidence="1" type="synonym">trmE</name>
    <name type="ordered locus">Cag_0100</name>
</gene>